<name>SYW_PYRFU</name>
<feature type="chain" id="PRO_0000136729" description="Tryptophan--tRNA ligase">
    <location>
        <begin position="1"/>
        <end position="385"/>
    </location>
</feature>
<feature type="short sequence motif" description="'HIGH' region">
    <location>
        <begin position="82"/>
        <end position="90"/>
    </location>
</feature>
<feature type="short sequence motif" description="'KMSKS' region">
    <location>
        <begin position="253"/>
        <end position="257"/>
    </location>
</feature>
<gene>
    <name evidence="1" type="primary">trpS</name>
    <name type="ordered locus">PF0241</name>
</gene>
<comment type="catalytic activity">
    <reaction evidence="1">
        <text>tRNA(Trp) + L-tryptophan + ATP = L-tryptophyl-tRNA(Trp) + AMP + diphosphate + H(+)</text>
        <dbReference type="Rhea" id="RHEA:24080"/>
        <dbReference type="Rhea" id="RHEA-COMP:9671"/>
        <dbReference type="Rhea" id="RHEA-COMP:9705"/>
        <dbReference type="ChEBI" id="CHEBI:15378"/>
        <dbReference type="ChEBI" id="CHEBI:30616"/>
        <dbReference type="ChEBI" id="CHEBI:33019"/>
        <dbReference type="ChEBI" id="CHEBI:57912"/>
        <dbReference type="ChEBI" id="CHEBI:78442"/>
        <dbReference type="ChEBI" id="CHEBI:78535"/>
        <dbReference type="ChEBI" id="CHEBI:456215"/>
        <dbReference type="EC" id="6.1.1.2"/>
    </reaction>
</comment>
<comment type="subcellular location">
    <subcellularLocation>
        <location evidence="1">Cytoplasm</location>
    </subcellularLocation>
</comment>
<comment type="similarity">
    <text evidence="1">Belongs to the class-I aminoacyl-tRNA synthetase family.</text>
</comment>
<organism>
    <name type="scientific">Pyrococcus furiosus (strain ATCC 43587 / DSM 3638 / JCM 8422 / Vc1)</name>
    <dbReference type="NCBI Taxonomy" id="186497"/>
    <lineage>
        <taxon>Archaea</taxon>
        <taxon>Methanobacteriati</taxon>
        <taxon>Methanobacteriota</taxon>
        <taxon>Thermococci</taxon>
        <taxon>Thermococcales</taxon>
        <taxon>Thermococcaceae</taxon>
        <taxon>Pyrococcus</taxon>
    </lineage>
</organism>
<dbReference type="EC" id="6.1.1.2" evidence="1"/>
<dbReference type="EMBL" id="AE009950">
    <property type="protein sequence ID" value="AAL80365.1"/>
    <property type="molecule type" value="Genomic_DNA"/>
</dbReference>
<dbReference type="RefSeq" id="WP_011011356.1">
    <property type="nucleotide sequence ID" value="NZ_CP023154.1"/>
</dbReference>
<dbReference type="SMR" id="Q8U453"/>
<dbReference type="STRING" id="186497.PF0241"/>
<dbReference type="PaxDb" id="186497-PF0241"/>
<dbReference type="KEGG" id="pfu:PF0241"/>
<dbReference type="PATRIC" id="fig|186497.12.peg.251"/>
<dbReference type="eggNOG" id="arCOG01887">
    <property type="taxonomic scope" value="Archaea"/>
</dbReference>
<dbReference type="HOGENOM" id="CLU_032621_0_1_2"/>
<dbReference type="OrthoDB" id="371821at2157"/>
<dbReference type="PhylomeDB" id="Q8U453"/>
<dbReference type="Proteomes" id="UP000001013">
    <property type="component" value="Chromosome"/>
</dbReference>
<dbReference type="GO" id="GO:0005737">
    <property type="term" value="C:cytoplasm"/>
    <property type="evidence" value="ECO:0007669"/>
    <property type="project" value="UniProtKB-SubCell"/>
</dbReference>
<dbReference type="GO" id="GO:0005524">
    <property type="term" value="F:ATP binding"/>
    <property type="evidence" value="ECO:0007669"/>
    <property type="project" value="UniProtKB-UniRule"/>
</dbReference>
<dbReference type="GO" id="GO:0004830">
    <property type="term" value="F:tryptophan-tRNA ligase activity"/>
    <property type="evidence" value="ECO:0007669"/>
    <property type="project" value="UniProtKB-UniRule"/>
</dbReference>
<dbReference type="GO" id="GO:0006436">
    <property type="term" value="P:tryptophanyl-tRNA aminoacylation"/>
    <property type="evidence" value="ECO:0007669"/>
    <property type="project" value="UniProtKB-UniRule"/>
</dbReference>
<dbReference type="CDD" id="cd00806">
    <property type="entry name" value="TrpRS_core"/>
    <property type="match status" value="1"/>
</dbReference>
<dbReference type="FunFam" id="1.10.240.10:FF:000007">
    <property type="entry name" value="Tryptophan--tRNA ligase"/>
    <property type="match status" value="1"/>
</dbReference>
<dbReference type="FunFam" id="3.40.50.620:FF:000138">
    <property type="entry name" value="Tryptophan--tRNA ligase"/>
    <property type="match status" value="1"/>
</dbReference>
<dbReference type="Gene3D" id="3.40.50.620">
    <property type="entry name" value="HUPs"/>
    <property type="match status" value="1"/>
</dbReference>
<dbReference type="Gene3D" id="1.10.240.10">
    <property type="entry name" value="Tyrosyl-Transfer RNA Synthetase"/>
    <property type="match status" value="1"/>
</dbReference>
<dbReference type="HAMAP" id="MF_00140_A">
    <property type="entry name" value="Trp_tRNA_synth_A"/>
    <property type="match status" value="1"/>
</dbReference>
<dbReference type="InterPro" id="IPR001412">
    <property type="entry name" value="aa-tRNA-synth_I_CS"/>
</dbReference>
<dbReference type="InterPro" id="IPR002305">
    <property type="entry name" value="aa-tRNA-synth_Ic"/>
</dbReference>
<dbReference type="InterPro" id="IPR014729">
    <property type="entry name" value="Rossmann-like_a/b/a_fold"/>
</dbReference>
<dbReference type="InterPro" id="IPR002306">
    <property type="entry name" value="Trp-tRNA-ligase"/>
</dbReference>
<dbReference type="InterPro" id="IPR020653">
    <property type="entry name" value="Tryptophan-tRNA-ligase_arc"/>
</dbReference>
<dbReference type="NCBIfam" id="NF008924">
    <property type="entry name" value="PRK12285.1-1"/>
    <property type="match status" value="1"/>
</dbReference>
<dbReference type="NCBIfam" id="NF008927">
    <property type="entry name" value="PRK12285.1-4"/>
    <property type="match status" value="1"/>
</dbReference>
<dbReference type="NCBIfam" id="TIGR00233">
    <property type="entry name" value="trpS"/>
    <property type="match status" value="1"/>
</dbReference>
<dbReference type="PANTHER" id="PTHR10055:SF1">
    <property type="entry name" value="TRYPTOPHAN--TRNA LIGASE, CYTOPLASMIC"/>
    <property type="match status" value="1"/>
</dbReference>
<dbReference type="PANTHER" id="PTHR10055">
    <property type="entry name" value="TRYPTOPHANYL-TRNA SYNTHETASE"/>
    <property type="match status" value="1"/>
</dbReference>
<dbReference type="Pfam" id="PF00579">
    <property type="entry name" value="tRNA-synt_1b"/>
    <property type="match status" value="1"/>
</dbReference>
<dbReference type="PRINTS" id="PR01039">
    <property type="entry name" value="TRNASYNTHTRP"/>
</dbReference>
<dbReference type="SUPFAM" id="SSF52374">
    <property type="entry name" value="Nucleotidylyl transferase"/>
    <property type="match status" value="1"/>
</dbReference>
<dbReference type="PROSITE" id="PS00178">
    <property type="entry name" value="AA_TRNA_LIGASE_I"/>
    <property type="match status" value="1"/>
</dbReference>
<proteinExistence type="inferred from homology"/>
<keyword id="KW-0030">Aminoacyl-tRNA synthetase</keyword>
<keyword id="KW-0067">ATP-binding</keyword>
<keyword id="KW-0963">Cytoplasm</keyword>
<keyword id="KW-0436">Ligase</keyword>
<keyword id="KW-0547">Nucleotide-binding</keyword>
<keyword id="KW-0648">Protein biosynthesis</keyword>
<keyword id="KW-1185">Reference proteome</keyword>
<reference key="1">
    <citation type="journal article" date="1999" name="Genetics">
        <title>Divergence of the hyperthermophilic archaea Pyrococcus furiosus and P. horikoshii inferred from complete genomic sequences.</title>
        <authorList>
            <person name="Maeder D.L."/>
            <person name="Weiss R.B."/>
            <person name="Dunn D.M."/>
            <person name="Cherry J.L."/>
            <person name="Gonzalez J.M."/>
            <person name="DiRuggiero J."/>
            <person name="Robb F.T."/>
        </authorList>
    </citation>
    <scope>NUCLEOTIDE SEQUENCE [LARGE SCALE GENOMIC DNA]</scope>
    <source>
        <strain>ATCC 43587 / DSM 3638 / JCM 8422 / Vc1</strain>
    </source>
</reference>
<evidence type="ECO:0000255" key="1">
    <source>
        <dbReference type="HAMAP-Rule" id="MF_00140"/>
    </source>
</evidence>
<accession>Q8U453</accession>
<sequence>MEEEFKVTPWEVEGIIDYNKLIEQFGTSPLTDDLLERTARLTKSELPIFFRRKFFFSHRDYDKVLDDYEQGKGFFLYTGRGPSGPMHIGHIIPFFATKWLQEKFDVNLYIQITDDEKFLFKENLTFEDTKYWAYQNILDIIAVGFDPDKTFIFQNSEFTKIYEMAIPIAKKINFSMAKAVFGFTEQSKIGMIFFPAIQAAPTFFEKKRCLIPAAIDQDPYWRLQRDFAESLGYYKTAALHSKFFPPLTGLEGKMSASKPETAIYLTDNPEEAGKKIWKFALTGGQPTLKEQREKGGNPEKCVVFKWLEIFFEPDDKKLMERYYACKNGELLCGECKRYLIQRVQEFLKEHQEKRKKAEKLVEKFKYTGKLAQEQWNKAIPDPLKK</sequence>
<protein>
    <recommendedName>
        <fullName evidence="1">Tryptophan--tRNA ligase</fullName>
        <ecNumber evidence="1">6.1.1.2</ecNumber>
    </recommendedName>
    <alternativeName>
        <fullName evidence="1">Tryptophanyl-tRNA synthetase</fullName>
        <shortName evidence="1">TrpRS</shortName>
    </alternativeName>
</protein>